<dbReference type="EMBL" id="Y09572">
    <property type="protein sequence ID" value="CAA70764.1"/>
    <property type="molecule type" value="Genomic_DNA"/>
</dbReference>
<dbReference type="SMR" id="O69272"/>
<dbReference type="GO" id="GO:0010181">
    <property type="term" value="F:FMN binding"/>
    <property type="evidence" value="ECO:0007669"/>
    <property type="project" value="InterPro"/>
</dbReference>
<dbReference type="GO" id="GO:0036211">
    <property type="term" value="P:protein modification process"/>
    <property type="evidence" value="ECO:0007669"/>
    <property type="project" value="InterPro"/>
</dbReference>
<dbReference type="Gene3D" id="3.40.50.360">
    <property type="match status" value="1"/>
</dbReference>
<dbReference type="HAMAP" id="MF_00128">
    <property type="entry name" value="NrdI"/>
    <property type="match status" value="1"/>
</dbReference>
<dbReference type="InterPro" id="IPR029039">
    <property type="entry name" value="Flavoprotein-like_sf"/>
</dbReference>
<dbReference type="InterPro" id="IPR020852">
    <property type="entry name" value="RNR_Ib_NrdI_bac"/>
</dbReference>
<dbReference type="InterPro" id="IPR004465">
    <property type="entry name" value="RNR_NrdI"/>
</dbReference>
<dbReference type="NCBIfam" id="TIGR00333">
    <property type="entry name" value="nrdI"/>
    <property type="match status" value="1"/>
</dbReference>
<dbReference type="PANTHER" id="PTHR37297">
    <property type="entry name" value="PROTEIN NRDI"/>
    <property type="match status" value="1"/>
</dbReference>
<dbReference type="PANTHER" id="PTHR37297:SF1">
    <property type="entry name" value="PROTEIN NRDI"/>
    <property type="match status" value="1"/>
</dbReference>
<dbReference type="Pfam" id="PF07972">
    <property type="entry name" value="Flavodoxin_NdrI"/>
    <property type="match status" value="1"/>
</dbReference>
<dbReference type="PIRSF" id="PIRSF005087">
    <property type="entry name" value="NrdI"/>
    <property type="match status" value="1"/>
</dbReference>
<dbReference type="SUPFAM" id="SSF52218">
    <property type="entry name" value="Flavoproteins"/>
    <property type="match status" value="1"/>
</dbReference>
<accession>O69272</accession>
<organism>
    <name type="scientific">Corynebacterium ammoniagenes</name>
    <name type="common">Brevibacterium ammoniagenes</name>
    <dbReference type="NCBI Taxonomy" id="1697"/>
    <lineage>
        <taxon>Bacteria</taxon>
        <taxon>Bacillati</taxon>
        <taxon>Actinomycetota</taxon>
        <taxon>Actinomycetes</taxon>
        <taxon>Mycobacteriales</taxon>
        <taxon>Corynebacteriaceae</taxon>
        <taxon>Corynebacterium</taxon>
    </lineage>
</organism>
<reference key="1">
    <citation type="journal article" date="1998" name="J. Biol. Chem.">
        <title>The manganese-containing ribonucleotide reductase of Corynebacterium ammoniagenes is a class Ib enzyme.</title>
        <authorList>
            <person name="Fieschi F."/>
            <person name="Torrents E."/>
            <person name="Toulokhonova L."/>
            <person name="Jordan A."/>
            <person name="Hellman U."/>
            <person name="Barbe J."/>
            <person name="Gibert I."/>
            <person name="Karlsson M."/>
            <person name="Sjoeberg B.-M."/>
        </authorList>
    </citation>
    <scope>NUCLEOTIDE SEQUENCE [GENOMIC DNA]</scope>
    <source>
        <strain>ATCC 6872 / DSM 20305 / IAM 1645 / KCTC 1019 / NCTC 2399</strain>
    </source>
</reference>
<name>NRDI_CORAM</name>
<gene>
    <name type="primary">nrdI</name>
</gene>
<protein>
    <recommendedName>
        <fullName>Protein NrdI</fullName>
    </recommendedName>
</protein>
<proteinExistence type="inferred from homology"/>
<sequence length="144" mass="15897">MLVVYSSSVTDNTHRFVQKLDLPNVRIPLRLKDEPLIVNEPYVLVCPTYGGGVSLTGENSRPVPRQVIRFLNNEHNRSFIRAVVAGGNSNFGADFGKAGEVISAKCKVPYVYRFEMMGNEDDVRICRGGLVQNAAKLGLEKQAS</sequence>
<feature type="chain" id="PRO_0000164311" description="Protein NrdI">
    <location>
        <begin position="1"/>
        <end position="144"/>
    </location>
</feature>
<comment type="function">
    <text evidence="1">Probably involved in ribonucleotide reductase function.</text>
</comment>
<comment type="similarity">
    <text evidence="2">Belongs to the NrdI family.</text>
</comment>
<evidence type="ECO:0000250" key="1"/>
<evidence type="ECO:0000305" key="2"/>